<keyword id="KW-0963">Cytoplasm</keyword>
<keyword id="KW-0479">Metal-binding</keyword>
<keyword id="KW-0520">NAD</keyword>
<keyword id="KW-0560">Oxidoreductase</keyword>
<keyword id="KW-1185">Reference proteome</keyword>
<keyword id="KW-0862">Zinc</keyword>
<organism>
    <name type="scientific">Photobacterium profundum (strain SS9)</name>
    <dbReference type="NCBI Taxonomy" id="298386"/>
    <lineage>
        <taxon>Bacteria</taxon>
        <taxon>Pseudomonadati</taxon>
        <taxon>Pseudomonadota</taxon>
        <taxon>Gammaproteobacteria</taxon>
        <taxon>Vibrionales</taxon>
        <taxon>Vibrionaceae</taxon>
        <taxon>Photobacterium</taxon>
    </lineage>
</organism>
<dbReference type="EC" id="1.1.1.103" evidence="1"/>
<dbReference type="EMBL" id="CR378668">
    <property type="protein sequence ID" value="CAG20137.1"/>
    <property type="molecule type" value="Genomic_DNA"/>
</dbReference>
<dbReference type="RefSeq" id="WP_011218446.1">
    <property type="nucleotide sequence ID" value="NC_006370.1"/>
</dbReference>
<dbReference type="SMR" id="Q6LRD9"/>
<dbReference type="STRING" id="298386.PBPRA1730"/>
<dbReference type="KEGG" id="ppr:PBPRA1730"/>
<dbReference type="eggNOG" id="COG1063">
    <property type="taxonomic scope" value="Bacteria"/>
</dbReference>
<dbReference type="HOGENOM" id="CLU_026673_11_0_6"/>
<dbReference type="UniPathway" id="UPA00046">
    <property type="reaction ID" value="UER00505"/>
</dbReference>
<dbReference type="Proteomes" id="UP000000593">
    <property type="component" value="Chromosome 1"/>
</dbReference>
<dbReference type="GO" id="GO:0005737">
    <property type="term" value="C:cytoplasm"/>
    <property type="evidence" value="ECO:0007669"/>
    <property type="project" value="UniProtKB-SubCell"/>
</dbReference>
<dbReference type="GO" id="GO:0008743">
    <property type="term" value="F:L-threonine 3-dehydrogenase activity"/>
    <property type="evidence" value="ECO:0007669"/>
    <property type="project" value="UniProtKB-UniRule"/>
</dbReference>
<dbReference type="GO" id="GO:0008270">
    <property type="term" value="F:zinc ion binding"/>
    <property type="evidence" value="ECO:0007669"/>
    <property type="project" value="UniProtKB-UniRule"/>
</dbReference>
<dbReference type="GO" id="GO:0019518">
    <property type="term" value="P:L-threonine catabolic process to glycine"/>
    <property type="evidence" value="ECO:0007669"/>
    <property type="project" value="UniProtKB-UniPathway"/>
</dbReference>
<dbReference type="Gene3D" id="3.90.180.10">
    <property type="entry name" value="Medium-chain alcohol dehydrogenases, catalytic domain"/>
    <property type="match status" value="1"/>
</dbReference>
<dbReference type="Gene3D" id="3.40.50.720">
    <property type="entry name" value="NAD(P)-binding Rossmann-like Domain"/>
    <property type="match status" value="1"/>
</dbReference>
<dbReference type="HAMAP" id="MF_00627">
    <property type="entry name" value="Thr_dehydrog"/>
    <property type="match status" value="1"/>
</dbReference>
<dbReference type="InterPro" id="IPR013149">
    <property type="entry name" value="ADH-like_C"/>
</dbReference>
<dbReference type="InterPro" id="IPR013154">
    <property type="entry name" value="ADH-like_N"/>
</dbReference>
<dbReference type="InterPro" id="IPR002328">
    <property type="entry name" value="ADH_Zn_CS"/>
</dbReference>
<dbReference type="InterPro" id="IPR011032">
    <property type="entry name" value="GroES-like_sf"/>
</dbReference>
<dbReference type="InterPro" id="IPR004627">
    <property type="entry name" value="L-Threonine_3-DHase"/>
</dbReference>
<dbReference type="InterPro" id="IPR036291">
    <property type="entry name" value="NAD(P)-bd_dom_sf"/>
</dbReference>
<dbReference type="InterPro" id="IPR020843">
    <property type="entry name" value="PKS_ER"/>
</dbReference>
<dbReference type="InterPro" id="IPR050129">
    <property type="entry name" value="Zn_alcohol_dh"/>
</dbReference>
<dbReference type="NCBIfam" id="NF003808">
    <property type="entry name" value="PRK05396.1"/>
    <property type="match status" value="1"/>
</dbReference>
<dbReference type="NCBIfam" id="TIGR00692">
    <property type="entry name" value="tdh"/>
    <property type="match status" value="1"/>
</dbReference>
<dbReference type="PANTHER" id="PTHR43401">
    <property type="entry name" value="L-THREONINE 3-DEHYDROGENASE"/>
    <property type="match status" value="1"/>
</dbReference>
<dbReference type="PANTHER" id="PTHR43401:SF2">
    <property type="entry name" value="L-THREONINE 3-DEHYDROGENASE"/>
    <property type="match status" value="1"/>
</dbReference>
<dbReference type="Pfam" id="PF08240">
    <property type="entry name" value="ADH_N"/>
    <property type="match status" value="1"/>
</dbReference>
<dbReference type="Pfam" id="PF00107">
    <property type="entry name" value="ADH_zinc_N"/>
    <property type="match status" value="1"/>
</dbReference>
<dbReference type="SMART" id="SM00829">
    <property type="entry name" value="PKS_ER"/>
    <property type="match status" value="1"/>
</dbReference>
<dbReference type="SUPFAM" id="SSF50129">
    <property type="entry name" value="GroES-like"/>
    <property type="match status" value="1"/>
</dbReference>
<dbReference type="SUPFAM" id="SSF51735">
    <property type="entry name" value="NAD(P)-binding Rossmann-fold domains"/>
    <property type="match status" value="1"/>
</dbReference>
<dbReference type="PROSITE" id="PS00059">
    <property type="entry name" value="ADH_ZINC"/>
    <property type="match status" value="1"/>
</dbReference>
<protein>
    <recommendedName>
        <fullName evidence="1">L-threonine 3-dehydrogenase</fullName>
        <shortName evidence="1">TDH</shortName>
        <ecNumber evidence="1">1.1.1.103</ecNumber>
    </recommendedName>
</protein>
<feature type="chain" id="PRO_0000160848" description="L-threonine 3-dehydrogenase">
    <location>
        <begin position="1"/>
        <end position="343"/>
    </location>
</feature>
<feature type="active site" description="Charge relay system" evidence="1">
    <location>
        <position position="42"/>
    </location>
</feature>
<feature type="active site" description="Charge relay system" evidence="1">
    <location>
        <position position="45"/>
    </location>
</feature>
<feature type="binding site" evidence="1">
    <location>
        <position position="40"/>
    </location>
    <ligand>
        <name>Zn(2+)</name>
        <dbReference type="ChEBI" id="CHEBI:29105"/>
        <label>1</label>
        <note>catalytic</note>
    </ligand>
</feature>
<feature type="binding site" evidence="1">
    <location>
        <position position="65"/>
    </location>
    <ligand>
        <name>Zn(2+)</name>
        <dbReference type="ChEBI" id="CHEBI:29105"/>
        <label>1</label>
        <note>catalytic</note>
    </ligand>
</feature>
<feature type="binding site" evidence="1">
    <location>
        <position position="66"/>
    </location>
    <ligand>
        <name>Zn(2+)</name>
        <dbReference type="ChEBI" id="CHEBI:29105"/>
        <label>1</label>
        <note>catalytic</note>
    </ligand>
</feature>
<feature type="binding site" evidence="1">
    <location>
        <position position="95"/>
    </location>
    <ligand>
        <name>Zn(2+)</name>
        <dbReference type="ChEBI" id="CHEBI:29105"/>
        <label>2</label>
    </ligand>
</feature>
<feature type="binding site" evidence="1">
    <location>
        <position position="98"/>
    </location>
    <ligand>
        <name>Zn(2+)</name>
        <dbReference type="ChEBI" id="CHEBI:29105"/>
        <label>2</label>
    </ligand>
</feature>
<feature type="binding site" evidence="1">
    <location>
        <position position="101"/>
    </location>
    <ligand>
        <name>Zn(2+)</name>
        <dbReference type="ChEBI" id="CHEBI:29105"/>
        <label>2</label>
    </ligand>
</feature>
<feature type="binding site" evidence="1">
    <location>
        <position position="109"/>
    </location>
    <ligand>
        <name>Zn(2+)</name>
        <dbReference type="ChEBI" id="CHEBI:29105"/>
        <label>2</label>
    </ligand>
</feature>
<feature type="binding site" evidence="1">
    <location>
        <position position="177"/>
    </location>
    <ligand>
        <name>NAD(+)</name>
        <dbReference type="ChEBI" id="CHEBI:57540"/>
    </ligand>
</feature>
<feature type="binding site" evidence="1">
    <location>
        <position position="197"/>
    </location>
    <ligand>
        <name>NAD(+)</name>
        <dbReference type="ChEBI" id="CHEBI:57540"/>
    </ligand>
</feature>
<feature type="binding site" evidence="1">
    <location>
        <position position="202"/>
    </location>
    <ligand>
        <name>NAD(+)</name>
        <dbReference type="ChEBI" id="CHEBI:57540"/>
    </ligand>
</feature>
<feature type="binding site" evidence="1">
    <location>
        <begin position="264"/>
        <end position="266"/>
    </location>
    <ligand>
        <name>NAD(+)</name>
        <dbReference type="ChEBI" id="CHEBI:57540"/>
    </ligand>
</feature>
<feature type="binding site" evidence="1">
    <location>
        <begin position="288"/>
        <end position="289"/>
    </location>
    <ligand>
        <name>NAD(+)</name>
        <dbReference type="ChEBI" id="CHEBI:57540"/>
    </ligand>
</feature>
<feature type="site" description="Important for catalytic activity for the proton relay mechanism but does not participate directly in the coordination of zinc atom" evidence="1">
    <location>
        <position position="150"/>
    </location>
</feature>
<name>TDH_PHOPR</name>
<sequence>MKIKALSKLKPEEGIWMNEVDKPEMGHNDLLIRIKKTAICGTDVHIYNWDEWSQKTIPVPMVVGHEYVGEVVGIGQEVRGFTIGDRVSGEGHITCGHCRNCRGGRTHLCRNTTGVGVNRDGAFAEFLVIPAFNAFKIPAGISDDLASIFDPFGNAVHTALSFDLVGEDVLITGAGPIGIMAAAVAKHVGARHVVITDVNEYRLDLARKMGVTRAVNVANEKLEDVMSELGMTEGFDVGLEMSGVPSAFNGMLASMNHGGKVALLGIPPSDMAVDWTQVIFKGLVIKGIYGREMFETWYKMASLIQSGLDLTPIITHHYKIDDFQKGFDMMRSGMSGKVILDWE</sequence>
<evidence type="ECO:0000255" key="1">
    <source>
        <dbReference type="HAMAP-Rule" id="MF_00627"/>
    </source>
</evidence>
<comment type="function">
    <text evidence="1">Catalyzes the NAD(+)-dependent oxidation of L-threonine to 2-amino-3-ketobutyrate.</text>
</comment>
<comment type="catalytic activity">
    <reaction evidence="1">
        <text>L-threonine + NAD(+) = (2S)-2-amino-3-oxobutanoate + NADH + H(+)</text>
        <dbReference type="Rhea" id="RHEA:13161"/>
        <dbReference type="ChEBI" id="CHEBI:15378"/>
        <dbReference type="ChEBI" id="CHEBI:57540"/>
        <dbReference type="ChEBI" id="CHEBI:57926"/>
        <dbReference type="ChEBI" id="CHEBI:57945"/>
        <dbReference type="ChEBI" id="CHEBI:78948"/>
        <dbReference type="EC" id="1.1.1.103"/>
    </reaction>
</comment>
<comment type="cofactor">
    <cofactor evidence="1">
        <name>Zn(2+)</name>
        <dbReference type="ChEBI" id="CHEBI:29105"/>
    </cofactor>
    <text evidence="1">Binds 2 Zn(2+) ions per subunit.</text>
</comment>
<comment type="pathway">
    <text evidence="1">Amino-acid degradation; L-threonine degradation via oxydo-reductase pathway; glycine from L-threonine: step 1/2.</text>
</comment>
<comment type="subunit">
    <text evidence="1">Homotetramer.</text>
</comment>
<comment type="subcellular location">
    <subcellularLocation>
        <location evidence="1">Cytoplasm</location>
    </subcellularLocation>
</comment>
<comment type="similarity">
    <text evidence="1">Belongs to the zinc-containing alcohol dehydrogenase family.</text>
</comment>
<proteinExistence type="inferred from homology"/>
<gene>
    <name evidence="1" type="primary">tdh</name>
    <name type="ordered locus">PBPRA1730</name>
</gene>
<accession>Q6LRD9</accession>
<reference key="1">
    <citation type="journal article" date="2005" name="Science">
        <title>Life at depth: Photobacterium profundum genome sequence and expression analysis.</title>
        <authorList>
            <person name="Vezzi A."/>
            <person name="Campanaro S."/>
            <person name="D'Angelo M."/>
            <person name="Simonato F."/>
            <person name="Vitulo N."/>
            <person name="Lauro F.M."/>
            <person name="Cestaro A."/>
            <person name="Malacrida G."/>
            <person name="Simionati B."/>
            <person name="Cannata N."/>
            <person name="Romualdi C."/>
            <person name="Bartlett D.H."/>
            <person name="Valle G."/>
        </authorList>
    </citation>
    <scope>NUCLEOTIDE SEQUENCE [LARGE SCALE GENOMIC DNA]</scope>
    <source>
        <strain>ATCC BAA-1253 / SS9</strain>
    </source>
</reference>